<keyword id="KW-0067">ATP-binding</keyword>
<keyword id="KW-0173">Coenzyme A biosynthesis</keyword>
<keyword id="KW-0963">Cytoplasm</keyword>
<keyword id="KW-0418">Kinase</keyword>
<keyword id="KW-0547">Nucleotide-binding</keyword>
<keyword id="KW-0808">Transferase</keyword>
<reference key="1">
    <citation type="journal article" date="2007" name="ISME J.">
        <title>Population level functional diversity in a microbial community revealed by comparative genomic and metagenomic analyses.</title>
        <authorList>
            <person name="Bhaya D."/>
            <person name="Grossman A.R."/>
            <person name="Steunou A.-S."/>
            <person name="Khuri N."/>
            <person name="Cohan F.M."/>
            <person name="Hamamura N."/>
            <person name="Melendrez M.C."/>
            <person name="Bateson M.M."/>
            <person name="Ward D.M."/>
            <person name="Heidelberg J.F."/>
        </authorList>
    </citation>
    <scope>NUCLEOTIDE SEQUENCE [LARGE SCALE GENOMIC DNA]</scope>
    <source>
        <strain>JA-3-3Ab</strain>
    </source>
</reference>
<comment type="function">
    <text evidence="1">Catalyzes the phosphorylation of the 3'-hydroxyl group of dephosphocoenzyme A to form coenzyme A.</text>
</comment>
<comment type="catalytic activity">
    <reaction evidence="1">
        <text>3'-dephospho-CoA + ATP = ADP + CoA + H(+)</text>
        <dbReference type="Rhea" id="RHEA:18245"/>
        <dbReference type="ChEBI" id="CHEBI:15378"/>
        <dbReference type="ChEBI" id="CHEBI:30616"/>
        <dbReference type="ChEBI" id="CHEBI:57287"/>
        <dbReference type="ChEBI" id="CHEBI:57328"/>
        <dbReference type="ChEBI" id="CHEBI:456216"/>
        <dbReference type="EC" id="2.7.1.24"/>
    </reaction>
</comment>
<comment type="pathway">
    <text evidence="1">Cofactor biosynthesis; coenzyme A biosynthesis; CoA from (R)-pantothenate: step 5/5.</text>
</comment>
<comment type="subcellular location">
    <subcellularLocation>
        <location evidence="1">Cytoplasm</location>
    </subcellularLocation>
</comment>
<comment type="similarity">
    <text evidence="1">Belongs to the CoaE family.</text>
</comment>
<organism>
    <name type="scientific">Synechococcus sp. (strain JA-3-3Ab)</name>
    <name type="common">Cyanobacteria bacterium Yellowstone A-Prime</name>
    <dbReference type="NCBI Taxonomy" id="321327"/>
    <lineage>
        <taxon>Bacteria</taxon>
        <taxon>Bacillati</taxon>
        <taxon>Cyanobacteriota</taxon>
        <taxon>Cyanophyceae</taxon>
        <taxon>Synechococcales</taxon>
        <taxon>Synechococcaceae</taxon>
        <taxon>Synechococcus</taxon>
    </lineage>
</organism>
<gene>
    <name evidence="1" type="primary">coaE</name>
    <name type="ordered locus">CYA_0565</name>
</gene>
<accession>Q2JWS5</accession>
<sequence length="230" mass="25267">MRIIGLTGGIATGKSTVARILERHGIPVADADQMARQALAVGSPIRERVLQRYGRAIQDPSGALDRRQLGRIVFADAAERAWLEAQIHPFVKARLREFLEAHGASAPPEEATEARPSCQCPHGEGHPTVCLMIPLLFEAHMENWASEIWVVTCTPEQQRQRLAQRDLLTAAEIEARLASQWPLEEKARRAHVVLDNSGSLAQLEAQVRQALGAHPREGGAICPTPPSRIE</sequence>
<evidence type="ECO:0000255" key="1">
    <source>
        <dbReference type="HAMAP-Rule" id="MF_00376"/>
    </source>
</evidence>
<name>COAE_SYNJA</name>
<proteinExistence type="inferred from homology"/>
<feature type="chain" id="PRO_0000243355" description="Dephospho-CoA kinase">
    <location>
        <begin position="1"/>
        <end position="230"/>
    </location>
</feature>
<feature type="domain" description="DPCK" evidence="1">
    <location>
        <begin position="3"/>
        <end position="225"/>
    </location>
</feature>
<feature type="binding site" evidence="1">
    <location>
        <begin position="11"/>
        <end position="16"/>
    </location>
    <ligand>
        <name>ATP</name>
        <dbReference type="ChEBI" id="CHEBI:30616"/>
    </ligand>
</feature>
<dbReference type="EC" id="2.7.1.24" evidence="1"/>
<dbReference type="EMBL" id="CP000239">
    <property type="protein sequence ID" value="ABC98781.1"/>
    <property type="molecule type" value="Genomic_DNA"/>
</dbReference>
<dbReference type="RefSeq" id="WP_011429468.1">
    <property type="nucleotide sequence ID" value="NC_007775.1"/>
</dbReference>
<dbReference type="SMR" id="Q2JWS5"/>
<dbReference type="STRING" id="321327.CYA_0565"/>
<dbReference type="KEGG" id="cya:CYA_0565"/>
<dbReference type="eggNOG" id="COG0237">
    <property type="taxonomic scope" value="Bacteria"/>
</dbReference>
<dbReference type="HOGENOM" id="CLU_057180_0_0_3"/>
<dbReference type="OrthoDB" id="9812943at2"/>
<dbReference type="UniPathway" id="UPA00241">
    <property type="reaction ID" value="UER00356"/>
</dbReference>
<dbReference type="Proteomes" id="UP000008818">
    <property type="component" value="Chromosome"/>
</dbReference>
<dbReference type="GO" id="GO:0005737">
    <property type="term" value="C:cytoplasm"/>
    <property type="evidence" value="ECO:0007669"/>
    <property type="project" value="UniProtKB-SubCell"/>
</dbReference>
<dbReference type="GO" id="GO:0005524">
    <property type="term" value="F:ATP binding"/>
    <property type="evidence" value="ECO:0007669"/>
    <property type="project" value="UniProtKB-UniRule"/>
</dbReference>
<dbReference type="GO" id="GO:0004140">
    <property type="term" value="F:dephospho-CoA kinase activity"/>
    <property type="evidence" value="ECO:0007669"/>
    <property type="project" value="UniProtKB-UniRule"/>
</dbReference>
<dbReference type="GO" id="GO:0015937">
    <property type="term" value="P:coenzyme A biosynthetic process"/>
    <property type="evidence" value="ECO:0007669"/>
    <property type="project" value="UniProtKB-UniRule"/>
</dbReference>
<dbReference type="CDD" id="cd02022">
    <property type="entry name" value="DPCK"/>
    <property type="match status" value="1"/>
</dbReference>
<dbReference type="Gene3D" id="3.40.50.300">
    <property type="entry name" value="P-loop containing nucleotide triphosphate hydrolases"/>
    <property type="match status" value="1"/>
</dbReference>
<dbReference type="HAMAP" id="MF_00376">
    <property type="entry name" value="Dephospho_CoA_kinase"/>
    <property type="match status" value="1"/>
</dbReference>
<dbReference type="InterPro" id="IPR001977">
    <property type="entry name" value="Depp_CoAkinase"/>
</dbReference>
<dbReference type="InterPro" id="IPR027417">
    <property type="entry name" value="P-loop_NTPase"/>
</dbReference>
<dbReference type="NCBIfam" id="TIGR00152">
    <property type="entry name" value="dephospho-CoA kinase"/>
    <property type="match status" value="2"/>
</dbReference>
<dbReference type="PANTHER" id="PTHR10695:SF46">
    <property type="entry name" value="BIFUNCTIONAL COENZYME A SYNTHASE-RELATED"/>
    <property type="match status" value="1"/>
</dbReference>
<dbReference type="PANTHER" id="PTHR10695">
    <property type="entry name" value="DEPHOSPHO-COA KINASE-RELATED"/>
    <property type="match status" value="1"/>
</dbReference>
<dbReference type="Pfam" id="PF01121">
    <property type="entry name" value="CoaE"/>
    <property type="match status" value="2"/>
</dbReference>
<dbReference type="SUPFAM" id="SSF52540">
    <property type="entry name" value="P-loop containing nucleoside triphosphate hydrolases"/>
    <property type="match status" value="1"/>
</dbReference>
<dbReference type="PROSITE" id="PS51219">
    <property type="entry name" value="DPCK"/>
    <property type="match status" value="1"/>
</dbReference>
<protein>
    <recommendedName>
        <fullName evidence="1">Dephospho-CoA kinase</fullName>
        <ecNumber evidence="1">2.7.1.24</ecNumber>
    </recommendedName>
    <alternativeName>
        <fullName evidence="1">Dephosphocoenzyme A kinase</fullName>
    </alternativeName>
</protein>